<gene>
    <name evidence="1" type="primary">hslU</name>
    <name type="ordered locus">LSL_0946</name>
</gene>
<reference key="1">
    <citation type="journal article" date="2006" name="Proc. Natl. Acad. Sci. U.S.A.">
        <title>Multireplicon genome architecture of Lactobacillus salivarius.</title>
        <authorList>
            <person name="Claesson M.J."/>
            <person name="Li Y."/>
            <person name="Leahy S."/>
            <person name="Canchaya C."/>
            <person name="van Pijkeren J.P."/>
            <person name="Cerdeno-Tarraga A.M."/>
            <person name="Parkhill J."/>
            <person name="Flynn S."/>
            <person name="O'Sullivan G.C."/>
            <person name="Collins J.K."/>
            <person name="Higgins D."/>
            <person name="Shanahan F."/>
            <person name="Fitzgerald G.F."/>
            <person name="van Sinderen D."/>
            <person name="O'Toole P.W."/>
        </authorList>
    </citation>
    <scope>NUCLEOTIDE SEQUENCE [LARGE SCALE GENOMIC DNA]</scope>
    <source>
        <strain>UCC118</strain>
    </source>
</reference>
<organism>
    <name type="scientific">Ligilactobacillus salivarius (strain UCC118)</name>
    <name type="common">Lactobacillus salivarius</name>
    <dbReference type="NCBI Taxonomy" id="362948"/>
    <lineage>
        <taxon>Bacteria</taxon>
        <taxon>Bacillati</taxon>
        <taxon>Bacillota</taxon>
        <taxon>Bacilli</taxon>
        <taxon>Lactobacillales</taxon>
        <taxon>Lactobacillaceae</taxon>
        <taxon>Ligilactobacillus</taxon>
    </lineage>
</organism>
<name>HSLU_LIGS1</name>
<accession>Q1WTJ0</accession>
<protein>
    <recommendedName>
        <fullName evidence="1">ATP-dependent protease ATPase subunit HslU</fullName>
    </recommendedName>
    <alternativeName>
        <fullName evidence="1">Unfoldase HslU</fullName>
    </alternativeName>
</protein>
<dbReference type="EMBL" id="CP000233">
    <property type="protein sequence ID" value="ABD99756.1"/>
    <property type="molecule type" value="Genomic_DNA"/>
</dbReference>
<dbReference type="RefSeq" id="WP_011476064.1">
    <property type="nucleotide sequence ID" value="NC_007929.1"/>
</dbReference>
<dbReference type="RefSeq" id="YP_535839.1">
    <property type="nucleotide sequence ID" value="NC_007929.1"/>
</dbReference>
<dbReference type="SMR" id="Q1WTJ0"/>
<dbReference type="STRING" id="362948.LSL_0946"/>
<dbReference type="KEGG" id="lsl:LSL_0946"/>
<dbReference type="PATRIC" id="fig|362948.14.peg.1021"/>
<dbReference type="HOGENOM" id="CLU_033123_0_0_9"/>
<dbReference type="OrthoDB" id="9804062at2"/>
<dbReference type="Proteomes" id="UP000006559">
    <property type="component" value="Chromosome"/>
</dbReference>
<dbReference type="GO" id="GO:0009376">
    <property type="term" value="C:HslUV protease complex"/>
    <property type="evidence" value="ECO:0007669"/>
    <property type="project" value="UniProtKB-UniRule"/>
</dbReference>
<dbReference type="GO" id="GO:0005524">
    <property type="term" value="F:ATP binding"/>
    <property type="evidence" value="ECO:0007669"/>
    <property type="project" value="UniProtKB-UniRule"/>
</dbReference>
<dbReference type="GO" id="GO:0016887">
    <property type="term" value="F:ATP hydrolysis activity"/>
    <property type="evidence" value="ECO:0007669"/>
    <property type="project" value="InterPro"/>
</dbReference>
<dbReference type="GO" id="GO:0008233">
    <property type="term" value="F:peptidase activity"/>
    <property type="evidence" value="ECO:0007669"/>
    <property type="project" value="InterPro"/>
</dbReference>
<dbReference type="GO" id="GO:0036402">
    <property type="term" value="F:proteasome-activating activity"/>
    <property type="evidence" value="ECO:0007669"/>
    <property type="project" value="UniProtKB-UniRule"/>
</dbReference>
<dbReference type="GO" id="GO:0043335">
    <property type="term" value="P:protein unfolding"/>
    <property type="evidence" value="ECO:0007669"/>
    <property type="project" value="UniProtKB-UniRule"/>
</dbReference>
<dbReference type="GO" id="GO:0051603">
    <property type="term" value="P:proteolysis involved in protein catabolic process"/>
    <property type="evidence" value="ECO:0007669"/>
    <property type="project" value="TreeGrafter"/>
</dbReference>
<dbReference type="CDD" id="cd19498">
    <property type="entry name" value="RecA-like_HslU"/>
    <property type="match status" value="1"/>
</dbReference>
<dbReference type="FunFam" id="3.40.50.300:FF:000213">
    <property type="entry name" value="ATP-dependent protease ATPase subunit HslU"/>
    <property type="match status" value="1"/>
</dbReference>
<dbReference type="Gene3D" id="1.10.8.60">
    <property type="match status" value="1"/>
</dbReference>
<dbReference type="Gene3D" id="3.40.50.300">
    <property type="entry name" value="P-loop containing nucleotide triphosphate hydrolases"/>
    <property type="match status" value="2"/>
</dbReference>
<dbReference type="HAMAP" id="MF_00249">
    <property type="entry name" value="HslU"/>
    <property type="match status" value="1"/>
</dbReference>
<dbReference type="InterPro" id="IPR003593">
    <property type="entry name" value="AAA+_ATPase"/>
</dbReference>
<dbReference type="InterPro" id="IPR050052">
    <property type="entry name" value="ATP-dep_Clp_protease_ClpX"/>
</dbReference>
<dbReference type="InterPro" id="IPR003959">
    <property type="entry name" value="ATPase_AAA_core"/>
</dbReference>
<dbReference type="InterPro" id="IPR019489">
    <property type="entry name" value="Clp_ATPase_C"/>
</dbReference>
<dbReference type="InterPro" id="IPR004491">
    <property type="entry name" value="HslU"/>
</dbReference>
<dbReference type="InterPro" id="IPR027417">
    <property type="entry name" value="P-loop_NTPase"/>
</dbReference>
<dbReference type="NCBIfam" id="TIGR00390">
    <property type="entry name" value="hslU"/>
    <property type="match status" value="1"/>
</dbReference>
<dbReference type="NCBIfam" id="NF003544">
    <property type="entry name" value="PRK05201.1"/>
    <property type="match status" value="1"/>
</dbReference>
<dbReference type="PANTHER" id="PTHR48102">
    <property type="entry name" value="ATP-DEPENDENT CLP PROTEASE ATP-BINDING SUBUNIT CLPX-LIKE, MITOCHONDRIAL-RELATED"/>
    <property type="match status" value="1"/>
</dbReference>
<dbReference type="PANTHER" id="PTHR48102:SF3">
    <property type="entry name" value="ATP-DEPENDENT PROTEASE ATPASE SUBUNIT HSLU"/>
    <property type="match status" value="1"/>
</dbReference>
<dbReference type="Pfam" id="PF00004">
    <property type="entry name" value="AAA"/>
    <property type="match status" value="1"/>
</dbReference>
<dbReference type="Pfam" id="PF07724">
    <property type="entry name" value="AAA_2"/>
    <property type="match status" value="1"/>
</dbReference>
<dbReference type="SMART" id="SM00382">
    <property type="entry name" value="AAA"/>
    <property type="match status" value="1"/>
</dbReference>
<dbReference type="SMART" id="SM01086">
    <property type="entry name" value="ClpB_D2-small"/>
    <property type="match status" value="1"/>
</dbReference>
<dbReference type="SUPFAM" id="SSF52540">
    <property type="entry name" value="P-loop containing nucleoside triphosphate hydrolases"/>
    <property type="match status" value="1"/>
</dbReference>
<keyword id="KW-0067">ATP-binding</keyword>
<keyword id="KW-0143">Chaperone</keyword>
<keyword id="KW-0963">Cytoplasm</keyword>
<keyword id="KW-0547">Nucleotide-binding</keyword>
<keyword id="KW-1185">Reference proteome</keyword>
<evidence type="ECO:0000255" key="1">
    <source>
        <dbReference type="HAMAP-Rule" id="MF_00249"/>
    </source>
</evidence>
<comment type="function">
    <text evidence="1">ATPase subunit of a proteasome-like degradation complex; this subunit has chaperone activity. The binding of ATP and its subsequent hydrolysis by HslU are essential for unfolding of protein substrates subsequently hydrolyzed by HslV. HslU recognizes the N-terminal part of its protein substrates and unfolds these before they are guided to HslV for hydrolysis.</text>
</comment>
<comment type="subunit">
    <text evidence="1">A double ring-shaped homohexamer of HslV is capped on each side by a ring-shaped HslU homohexamer. The assembly of the HslU/HslV complex is dependent on binding of ATP.</text>
</comment>
<comment type="subcellular location">
    <subcellularLocation>
        <location evidence="1">Cytoplasm</location>
    </subcellularLocation>
</comment>
<comment type="similarity">
    <text evidence="1">Belongs to the ClpX chaperone family. HslU subfamily.</text>
</comment>
<feature type="chain" id="PRO_1000012756" description="ATP-dependent protease ATPase subunit HslU">
    <location>
        <begin position="1"/>
        <end position="467"/>
    </location>
</feature>
<feature type="binding site" evidence="1">
    <location>
        <position position="20"/>
    </location>
    <ligand>
        <name>ATP</name>
        <dbReference type="ChEBI" id="CHEBI:30616"/>
    </ligand>
</feature>
<feature type="binding site" evidence="1">
    <location>
        <begin position="62"/>
        <end position="67"/>
    </location>
    <ligand>
        <name>ATP</name>
        <dbReference type="ChEBI" id="CHEBI:30616"/>
    </ligand>
</feature>
<feature type="binding site" evidence="1">
    <location>
        <position position="280"/>
    </location>
    <ligand>
        <name>ATP</name>
        <dbReference type="ChEBI" id="CHEBI:30616"/>
    </ligand>
</feature>
<feature type="binding site" evidence="1">
    <location>
        <position position="345"/>
    </location>
    <ligand>
        <name>ATP</name>
        <dbReference type="ChEBI" id="CHEBI:30616"/>
    </ligand>
</feature>
<feature type="binding site" evidence="1">
    <location>
        <position position="417"/>
    </location>
    <ligand>
        <name>ATP</name>
        <dbReference type="ChEBI" id="CHEBI:30616"/>
    </ligand>
</feature>
<proteinExistence type="inferred from homology"/>
<sequence>MNEIDKTPRQIVAELDKYVIGQDSAKRAIAVALRNRYRRIQLPKDMQEDISPKNLLMIGPTGVGKTEIARRLAKIVNAPFVKVEATKFTEVGYVGRDVESMARDLVEVAYRMEQNDAFKQVRAQAAQQANKRLVKLIVPAKKKQENPNQYLFNALRDLQSGSFPNMNGNDMEEVTEDVRNERLSVAEQLKRGLLENNEVTIQVDDPSTQFNNQSGMLGQMGIDLSSLSSMMPTKKVERTMTVAEAREILIKEESEKLVNSADLADAAIKRAENTGIIFIDEIDKIASKSQQNAGQVSREGVQRDILPIVEGSQISTKYGLVKTDHILFIGSGAFHESKPSDLIAELQGRFPIRVELEDLSVDDFVKILTEPNNALVKQYIAMIGTDNIDVTFTIEAIHRIAEVAYQLNHDTENIGARRLHTILEKLLEDLLFEGPDMQMGDIKITEAYVNDKIGSIVEDKDLSQYIL</sequence>